<gene>
    <name type="primary">AADACL2</name>
</gene>
<organism>
    <name type="scientific">Homo sapiens</name>
    <name type="common">Human</name>
    <dbReference type="NCBI Taxonomy" id="9606"/>
    <lineage>
        <taxon>Eukaryota</taxon>
        <taxon>Metazoa</taxon>
        <taxon>Chordata</taxon>
        <taxon>Craniata</taxon>
        <taxon>Vertebrata</taxon>
        <taxon>Euteleostomi</taxon>
        <taxon>Mammalia</taxon>
        <taxon>Eutheria</taxon>
        <taxon>Euarchontoglires</taxon>
        <taxon>Primates</taxon>
        <taxon>Haplorrhini</taxon>
        <taxon>Catarrhini</taxon>
        <taxon>Hominidae</taxon>
        <taxon>Homo</taxon>
    </lineage>
</organism>
<keyword id="KW-0025">Alternative splicing</keyword>
<keyword id="KW-1015">Disulfide bond</keyword>
<keyword id="KW-0378">Hydrolase</keyword>
<keyword id="KW-1267">Proteomics identification</keyword>
<keyword id="KW-1185">Reference proteome</keyword>
<keyword id="KW-0964">Secreted</keyword>
<keyword id="KW-0732">Signal</keyword>
<reference key="1">
    <citation type="journal article" date="2007" name="BMC Genomics">
        <title>The full-ORF clone resource of the German cDNA consortium.</title>
        <authorList>
            <person name="Bechtel S."/>
            <person name="Rosenfelder H."/>
            <person name="Duda A."/>
            <person name="Schmidt C.P."/>
            <person name="Ernst U."/>
            <person name="Wellenreuther R."/>
            <person name="Mehrle A."/>
            <person name="Schuster C."/>
            <person name="Bahr A."/>
            <person name="Bloecker H."/>
            <person name="Heubner D."/>
            <person name="Hoerlein A."/>
            <person name="Michel G."/>
            <person name="Wedler H."/>
            <person name="Koehrer K."/>
            <person name="Ottenwaelder B."/>
            <person name="Poustka A."/>
            <person name="Wiemann S."/>
            <person name="Schupp I."/>
        </authorList>
    </citation>
    <scope>NUCLEOTIDE SEQUENCE [LARGE SCALE MRNA] (ISOFORM 2)</scope>
    <source>
        <tissue>Adipose tissue</tissue>
    </source>
</reference>
<reference key="2">
    <citation type="journal article" date="2006" name="Nature">
        <title>The DNA sequence, annotation and analysis of human chromosome 3.</title>
        <authorList>
            <person name="Muzny D.M."/>
            <person name="Scherer S.E."/>
            <person name="Kaul R."/>
            <person name="Wang J."/>
            <person name="Yu J."/>
            <person name="Sudbrak R."/>
            <person name="Buhay C.J."/>
            <person name="Chen R."/>
            <person name="Cree A."/>
            <person name="Ding Y."/>
            <person name="Dugan-Rocha S."/>
            <person name="Gill R."/>
            <person name="Gunaratne P."/>
            <person name="Harris R.A."/>
            <person name="Hawes A.C."/>
            <person name="Hernandez J."/>
            <person name="Hodgson A.V."/>
            <person name="Hume J."/>
            <person name="Jackson A."/>
            <person name="Khan Z.M."/>
            <person name="Kovar-Smith C."/>
            <person name="Lewis L.R."/>
            <person name="Lozado R.J."/>
            <person name="Metzker M.L."/>
            <person name="Milosavljevic A."/>
            <person name="Miner G.R."/>
            <person name="Morgan M.B."/>
            <person name="Nazareth L.V."/>
            <person name="Scott G."/>
            <person name="Sodergren E."/>
            <person name="Song X.-Z."/>
            <person name="Steffen D."/>
            <person name="Wei S."/>
            <person name="Wheeler D.A."/>
            <person name="Wright M.W."/>
            <person name="Worley K.C."/>
            <person name="Yuan Y."/>
            <person name="Zhang Z."/>
            <person name="Adams C.Q."/>
            <person name="Ansari-Lari M.A."/>
            <person name="Ayele M."/>
            <person name="Brown M.J."/>
            <person name="Chen G."/>
            <person name="Chen Z."/>
            <person name="Clendenning J."/>
            <person name="Clerc-Blankenburg K.P."/>
            <person name="Chen R."/>
            <person name="Chen Z."/>
            <person name="Davis C."/>
            <person name="Delgado O."/>
            <person name="Dinh H.H."/>
            <person name="Dong W."/>
            <person name="Draper H."/>
            <person name="Ernst S."/>
            <person name="Fu G."/>
            <person name="Gonzalez-Garay M.L."/>
            <person name="Garcia D.K."/>
            <person name="Gillett W."/>
            <person name="Gu J."/>
            <person name="Hao B."/>
            <person name="Haugen E."/>
            <person name="Havlak P."/>
            <person name="He X."/>
            <person name="Hennig S."/>
            <person name="Hu S."/>
            <person name="Huang W."/>
            <person name="Jackson L.R."/>
            <person name="Jacob L.S."/>
            <person name="Kelly S.H."/>
            <person name="Kube M."/>
            <person name="Levy R."/>
            <person name="Li Z."/>
            <person name="Liu B."/>
            <person name="Liu J."/>
            <person name="Liu W."/>
            <person name="Lu J."/>
            <person name="Maheshwari M."/>
            <person name="Nguyen B.-V."/>
            <person name="Okwuonu G.O."/>
            <person name="Palmeiri A."/>
            <person name="Pasternak S."/>
            <person name="Perez L.M."/>
            <person name="Phelps K.A."/>
            <person name="Plopper F.J."/>
            <person name="Qiang B."/>
            <person name="Raymond C."/>
            <person name="Rodriguez R."/>
            <person name="Saenphimmachak C."/>
            <person name="Santibanez J."/>
            <person name="Shen H."/>
            <person name="Shen Y."/>
            <person name="Subramanian S."/>
            <person name="Tabor P.E."/>
            <person name="Verduzco D."/>
            <person name="Waldron L."/>
            <person name="Wang J."/>
            <person name="Wang J."/>
            <person name="Wang Q."/>
            <person name="Williams G.A."/>
            <person name="Wong G.K.-S."/>
            <person name="Yao Z."/>
            <person name="Zhang J."/>
            <person name="Zhang X."/>
            <person name="Zhao G."/>
            <person name="Zhou J."/>
            <person name="Zhou Y."/>
            <person name="Nelson D."/>
            <person name="Lehrach H."/>
            <person name="Reinhardt R."/>
            <person name="Naylor S.L."/>
            <person name="Yang H."/>
            <person name="Olson M."/>
            <person name="Weinstock G."/>
            <person name="Gibbs R.A."/>
        </authorList>
    </citation>
    <scope>NUCLEOTIDE SEQUENCE [LARGE SCALE GENOMIC DNA]</scope>
</reference>
<reference key="3">
    <citation type="journal article" date="2004" name="Genome Res.">
        <title>The status, quality, and expansion of the NIH full-length cDNA project: the Mammalian Gene Collection (MGC).</title>
        <authorList>
            <consortium name="The MGC Project Team"/>
        </authorList>
    </citation>
    <scope>NUCLEOTIDE SEQUENCE [LARGE SCALE MRNA] (ISOFORM 1)</scope>
    <scope>VARIANT SER-186</scope>
    <source>
        <tissue>Placenta</tissue>
    </source>
</reference>
<protein>
    <recommendedName>
        <fullName>Arylacetamide deacetylase-like 2</fullName>
        <ecNumber>3.1.1.-</ecNumber>
    </recommendedName>
</protein>
<sequence length="401" mass="46099">MGLKALCLGLLCVLFVSHFYTPMPDNIEESWKIMALDAIAKTCTFTAMCFENMRIMRYEEFISMIFRLDYTQPLSDEYITVTDTTFVDIPVRLYLPKRKSETRRRAVIYFHGGGFCFGSSKQRAFDFLNRWTANTLDAVVVGVDYRLAPQHHFPAQFEDGLAAVKFFLLEKILTKYGVDPTRICIAGDSSGGNLATAVTQQVQNDAEIKHKIKMQVLLYPGLQITDSYLPSHRENEHGIVLTRDVAIKLVSLYFTKDEALPWAMRRNQHMPLESRHLFKFVNWSILLPEKYRKDYVYTEPILGGLSYSLPGLTDSRALPLLANDSQLQNLPLTYILTCQHDLLRDDGLMYVTRLRNVGVQVVHEHIEDGIHGALSFMTSPFYLRLGLRIRDMYVSWLDKNL</sequence>
<name>ADCL2_HUMAN</name>
<dbReference type="EC" id="3.1.1.-"/>
<dbReference type="EMBL" id="BX647585">
    <property type="protein sequence ID" value="CAI46075.1"/>
    <property type="status" value="ALT_SEQ"/>
    <property type="molecule type" value="mRNA"/>
</dbReference>
<dbReference type="EMBL" id="AC069067">
    <property type="status" value="NOT_ANNOTATED_CDS"/>
    <property type="molecule type" value="Genomic_DNA"/>
</dbReference>
<dbReference type="EMBL" id="BC065724">
    <property type="protein sequence ID" value="AAH65724.1"/>
    <property type="status" value="ALT_INIT"/>
    <property type="molecule type" value="mRNA"/>
</dbReference>
<dbReference type="CCDS" id="CCDS3161.2">
    <molecule id="Q6P093-1"/>
</dbReference>
<dbReference type="RefSeq" id="NP_997248.2">
    <molecule id="Q6P093-1"/>
    <property type="nucleotide sequence ID" value="NM_207365.4"/>
</dbReference>
<dbReference type="SMR" id="Q6P093"/>
<dbReference type="BioGRID" id="131319">
    <property type="interactions" value="1"/>
</dbReference>
<dbReference type="STRING" id="9606.ENSP00000348911"/>
<dbReference type="DrugBank" id="DB07814">
    <property type="generic name" value="Gibberellic acid"/>
</dbReference>
<dbReference type="DrugBank" id="DB07815">
    <property type="generic name" value="Gibberellin A4"/>
</dbReference>
<dbReference type="ESTHER" id="human-AADACL2">
    <property type="family name" value="Arylacetamide_deacetylase"/>
</dbReference>
<dbReference type="iPTMnet" id="Q6P093"/>
<dbReference type="PhosphoSitePlus" id="Q6P093"/>
<dbReference type="BioMuta" id="AADACL2"/>
<dbReference type="DMDM" id="269849709"/>
<dbReference type="jPOST" id="Q6P093"/>
<dbReference type="MassIVE" id="Q6P093"/>
<dbReference type="PaxDb" id="9606-ENSP00000348911"/>
<dbReference type="PeptideAtlas" id="Q6P093"/>
<dbReference type="ProteomicsDB" id="66809">
    <molecule id="Q6P093-1"/>
</dbReference>
<dbReference type="Antibodypedia" id="33616">
    <property type="antibodies" value="118 antibodies from 15 providers"/>
</dbReference>
<dbReference type="DNASU" id="344752"/>
<dbReference type="Ensembl" id="ENST00000356517.4">
    <molecule id="Q6P093-1"/>
    <property type="protein sequence ID" value="ENSP00000348911.3"/>
    <property type="gene ID" value="ENSG00000197953.6"/>
</dbReference>
<dbReference type="Ensembl" id="ENST00000570799.1">
    <molecule id="Q6P093-1"/>
    <property type="protein sequence ID" value="ENSP00000461239.1"/>
    <property type="gene ID" value="ENSG00000261846.2"/>
</dbReference>
<dbReference type="GeneID" id="344752"/>
<dbReference type="KEGG" id="hsa:344752"/>
<dbReference type="MANE-Select" id="ENST00000356517.4">
    <property type="protein sequence ID" value="ENSP00000348911.3"/>
    <property type="RefSeq nucleotide sequence ID" value="NM_207365.4"/>
    <property type="RefSeq protein sequence ID" value="NP_997248.2"/>
</dbReference>
<dbReference type="UCSC" id="uc003ezc.4">
    <molecule id="Q6P093-1"/>
    <property type="organism name" value="human"/>
</dbReference>
<dbReference type="AGR" id="HGNC:24427"/>
<dbReference type="CTD" id="344752"/>
<dbReference type="DisGeNET" id="344752"/>
<dbReference type="GeneCards" id="AADACL2"/>
<dbReference type="HGNC" id="HGNC:24427">
    <property type="gene designation" value="AADACL2"/>
</dbReference>
<dbReference type="HPA" id="ENSG00000197953">
    <property type="expression patterns" value="Tissue enriched (skin)"/>
</dbReference>
<dbReference type="neXtProt" id="NX_Q6P093"/>
<dbReference type="OpenTargets" id="ENSG00000197953"/>
<dbReference type="PharmGKB" id="PA142670463"/>
<dbReference type="VEuPathDB" id="HostDB:ENSG00000197953"/>
<dbReference type="eggNOG" id="KOG1515">
    <property type="taxonomic scope" value="Eukaryota"/>
</dbReference>
<dbReference type="GeneTree" id="ENSGT00940000161405"/>
<dbReference type="HOGENOM" id="CLU_012494_12_0_1"/>
<dbReference type="InParanoid" id="Q6P093"/>
<dbReference type="OMA" id="DHVYTEP"/>
<dbReference type="OrthoDB" id="408631at2759"/>
<dbReference type="PAN-GO" id="Q6P093">
    <property type="GO annotations" value="0 GO annotations based on evolutionary models"/>
</dbReference>
<dbReference type="PhylomeDB" id="Q6P093"/>
<dbReference type="TreeFam" id="TF314978"/>
<dbReference type="PathwayCommons" id="Q6P093"/>
<dbReference type="SABIO-RK" id="Q6P093"/>
<dbReference type="BioGRID-ORCS" id="344752">
    <property type="hits" value="13 hits in 1150 CRISPR screens"/>
</dbReference>
<dbReference type="ChiTaRS" id="AADACL2">
    <property type="organism name" value="human"/>
</dbReference>
<dbReference type="GenomeRNAi" id="344752"/>
<dbReference type="Pharos" id="Q6P093">
    <property type="development level" value="Tdark"/>
</dbReference>
<dbReference type="PRO" id="PR:Q6P093"/>
<dbReference type="Proteomes" id="UP000005640">
    <property type="component" value="Chromosome 3"/>
</dbReference>
<dbReference type="RNAct" id="Q6P093">
    <property type="molecule type" value="protein"/>
</dbReference>
<dbReference type="Bgee" id="ENSG00000197953">
    <property type="expression patterns" value="Expressed in skin of abdomen and 40 other cell types or tissues"/>
</dbReference>
<dbReference type="ExpressionAtlas" id="Q6P093">
    <property type="expression patterns" value="baseline and differential"/>
</dbReference>
<dbReference type="GO" id="GO:0005576">
    <property type="term" value="C:extracellular region"/>
    <property type="evidence" value="ECO:0007669"/>
    <property type="project" value="UniProtKB-SubCell"/>
</dbReference>
<dbReference type="GO" id="GO:0016020">
    <property type="term" value="C:membrane"/>
    <property type="evidence" value="ECO:0007669"/>
    <property type="project" value="InterPro"/>
</dbReference>
<dbReference type="GO" id="GO:0052689">
    <property type="term" value="F:carboxylic ester hydrolase activity"/>
    <property type="evidence" value="ECO:0007669"/>
    <property type="project" value="InterPro"/>
</dbReference>
<dbReference type="Gene3D" id="3.40.50.1820">
    <property type="entry name" value="alpha/beta hydrolase"/>
    <property type="match status" value="1"/>
</dbReference>
<dbReference type="InterPro" id="IPR013094">
    <property type="entry name" value="AB_hydrolase_3"/>
</dbReference>
<dbReference type="InterPro" id="IPR029058">
    <property type="entry name" value="AB_hydrolase_fold"/>
</dbReference>
<dbReference type="InterPro" id="IPR017157">
    <property type="entry name" value="Arylacetamide_deacetylase"/>
</dbReference>
<dbReference type="InterPro" id="IPR050300">
    <property type="entry name" value="GDXG_lipolytic_enzyme"/>
</dbReference>
<dbReference type="InterPro" id="IPR033140">
    <property type="entry name" value="Lipase_GDXG_put_SER_AS"/>
</dbReference>
<dbReference type="PANTHER" id="PTHR48081">
    <property type="entry name" value="AB HYDROLASE SUPERFAMILY PROTEIN C4A8.06C"/>
    <property type="match status" value="1"/>
</dbReference>
<dbReference type="PANTHER" id="PTHR48081:SF28">
    <property type="entry name" value="ALPHA_BETA HYDROLASE FOLD-3 DOMAIN-CONTAINING PROTEIN"/>
    <property type="match status" value="1"/>
</dbReference>
<dbReference type="Pfam" id="PF07859">
    <property type="entry name" value="Abhydrolase_3"/>
    <property type="match status" value="2"/>
</dbReference>
<dbReference type="PIRSF" id="PIRSF037251">
    <property type="entry name" value="Arylacetamide_deacetylase"/>
    <property type="match status" value="1"/>
</dbReference>
<dbReference type="SUPFAM" id="SSF53474">
    <property type="entry name" value="alpha/beta-Hydrolases"/>
    <property type="match status" value="1"/>
</dbReference>
<dbReference type="PROSITE" id="PS01174">
    <property type="entry name" value="LIPASE_GDXG_SER"/>
    <property type="match status" value="1"/>
</dbReference>
<proteinExistence type="evidence at protein level"/>
<feature type="signal peptide" evidence="4">
    <location>
        <begin position="1"/>
        <end position="18"/>
    </location>
</feature>
<feature type="chain" id="PRO_0000314960" description="Arylacetamide deacetylase-like 2">
    <location>
        <begin position="19"/>
        <end position="401"/>
    </location>
</feature>
<feature type="short sequence motif" description="Involved in the stabilization of the negatively charged intermediate by the formation of the oxyanion hole" evidence="2">
    <location>
        <begin position="111"/>
        <end position="113"/>
    </location>
</feature>
<feature type="active site" evidence="3 5">
    <location>
        <position position="189"/>
    </location>
</feature>
<feature type="active site" evidence="3">
    <location>
        <position position="341"/>
    </location>
</feature>
<feature type="active site" evidence="3">
    <location>
        <position position="371"/>
    </location>
</feature>
<feature type="disulfide bond" evidence="1">
    <location>
        <begin position="116"/>
        <end position="338"/>
    </location>
</feature>
<feature type="splice variant" id="VSP_038389" description="In isoform 2." evidence="7">
    <original>AMCFENM</original>
    <variation>NRGPLTS</variation>
    <location>
        <begin position="47"/>
        <end position="53"/>
    </location>
</feature>
<feature type="splice variant" id="VSP_038390" description="In isoform 2." evidence="7">
    <location>
        <begin position="54"/>
        <end position="401"/>
    </location>
</feature>
<feature type="sequence variant" id="VAR_038140" description="In dbSNP:rs1972977." evidence="6">
    <original>A</original>
    <variation>S</variation>
    <location>
        <position position="186"/>
    </location>
</feature>
<feature type="sequence variant" id="VAR_038141" description="In dbSNP:rs1052562.">
    <original>L</original>
    <variation>I</variation>
    <location>
        <position position="343"/>
    </location>
</feature>
<feature type="sequence conflict" description="In Ref. 1; CAI46075." evidence="8" ref="1">
    <original>N</original>
    <variation>S</variation>
    <location>
        <position position="26"/>
    </location>
</feature>
<accession>Q6P093</accession>
<accession>Q5HYJ4</accession>
<comment type="subcellular location">
    <subcellularLocation>
        <location>Secreted</location>
    </subcellularLocation>
</comment>
<comment type="alternative products">
    <event type="alternative splicing"/>
    <isoform>
        <id>Q6P093-1</id>
        <name>1</name>
        <sequence type="displayed"/>
    </isoform>
    <isoform>
        <id>Q6P093-3</id>
        <name>2</name>
        <sequence type="described" ref="VSP_038389 VSP_038390"/>
    </isoform>
</comment>
<comment type="miscellaneous">
    <molecule>Isoform 2</molecule>
    <text evidence="8">May be produced at very low levels due to a premature stop codon in the mRNA, leading to nonsense-mediated mRNA decay.</text>
</comment>
<comment type="similarity">
    <text evidence="8">Belongs to the 'GDXG' lipolytic enzyme family.</text>
</comment>
<comment type="sequence caution" evidence="8">
    <conflict type="erroneous initiation">
        <sequence resource="EMBL-CDS" id="AAH65724"/>
    </conflict>
    <text>Truncated N-terminus.</text>
</comment>
<comment type="sequence caution" evidence="8">
    <conflict type="miscellaneous discrepancy">
        <sequence resource="EMBL-CDS" id="CAI46075"/>
    </conflict>
    <text>Wrong choice of CDS.</text>
</comment>
<evidence type="ECO:0000250" key="1"/>
<evidence type="ECO:0000250" key="2">
    <source>
        <dbReference type="UniProtKB" id="Q5NUF3"/>
    </source>
</evidence>
<evidence type="ECO:0000250" key="3">
    <source>
        <dbReference type="UniProtKB" id="Q8BLF1"/>
    </source>
</evidence>
<evidence type="ECO:0000255" key="4"/>
<evidence type="ECO:0000255" key="5">
    <source>
        <dbReference type="PROSITE-ProRule" id="PRU10038"/>
    </source>
</evidence>
<evidence type="ECO:0000269" key="6">
    <source>
    </source>
</evidence>
<evidence type="ECO:0000303" key="7">
    <source>
    </source>
</evidence>
<evidence type="ECO:0000305" key="8"/>